<organism>
    <name type="scientific">Nostoc sp. (strain PCC 7120 / SAG 25.82 / UTEX 2576)</name>
    <dbReference type="NCBI Taxonomy" id="103690"/>
    <lineage>
        <taxon>Bacteria</taxon>
        <taxon>Bacillati</taxon>
        <taxon>Cyanobacteriota</taxon>
        <taxon>Cyanophyceae</taxon>
        <taxon>Nostocales</taxon>
        <taxon>Nostocaceae</taxon>
        <taxon>Nostoc</taxon>
    </lineage>
</organism>
<sequence length="294" mass="31274">MGDFGTVLTAMITPFKADGSVNYAVAAELAANLVDNGTDTLVVCGTTGESPTLSWDEEYNLFVEVLQTVAGKAKVIAGCGSNSTKEAIAATQKAAKIGVHGTLQVVPYYNKPPQAGLYQHFQAIAQACPELPLLLYNVPGRTGQNLSPETVVRLAEIDNIVGVKEASGNLDQAGEIRRLTPKEFQIYAGDDSLTLPLLAIGAKGVVSVASHLVGNQLQQMIQAFNSGQVTVASDIHLRLLPLFKTLFITTNPIPIKQALKLQGWEVGSTRPPLSDADAEVSQKLEAVMKHLDLI</sequence>
<proteinExistence type="inferred from homology"/>
<protein>
    <recommendedName>
        <fullName evidence="1">4-hydroxy-tetrahydrodipicolinate synthase</fullName>
        <shortName evidence="1">HTPA synthase</shortName>
        <ecNumber evidence="1">4.3.3.7</ecNumber>
    </recommendedName>
</protein>
<reference key="1">
    <citation type="journal article" date="2001" name="DNA Res.">
        <title>Complete genomic sequence of the filamentous nitrogen-fixing cyanobacterium Anabaena sp. strain PCC 7120.</title>
        <authorList>
            <person name="Kaneko T."/>
            <person name="Nakamura Y."/>
            <person name="Wolk C.P."/>
            <person name="Kuritz T."/>
            <person name="Sasamoto S."/>
            <person name="Watanabe A."/>
            <person name="Iriguchi M."/>
            <person name="Ishikawa A."/>
            <person name="Kawashima K."/>
            <person name="Kimura T."/>
            <person name="Kishida Y."/>
            <person name="Kohara M."/>
            <person name="Matsumoto M."/>
            <person name="Matsuno A."/>
            <person name="Muraki A."/>
            <person name="Nakazaki N."/>
            <person name="Shimpo S."/>
            <person name="Sugimoto M."/>
            <person name="Takazawa M."/>
            <person name="Yamada M."/>
            <person name="Yasuda M."/>
            <person name="Tabata S."/>
        </authorList>
    </citation>
    <scope>NUCLEOTIDE SEQUENCE [LARGE SCALE GENOMIC DNA]</scope>
    <source>
        <strain>PCC 7120 / SAG 25.82 / UTEX 2576</strain>
    </source>
</reference>
<feature type="chain" id="PRO_0000103080" description="4-hydroxy-tetrahydrodipicolinate synthase">
    <location>
        <begin position="1"/>
        <end position="294"/>
    </location>
</feature>
<feature type="active site" description="Proton donor/acceptor" evidence="1">
    <location>
        <position position="136"/>
    </location>
</feature>
<feature type="active site" description="Schiff-base intermediate with substrate" evidence="1">
    <location>
        <position position="164"/>
    </location>
</feature>
<feature type="binding site" evidence="1">
    <location>
        <position position="47"/>
    </location>
    <ligand>
        <name>pyruvate</name>
        <dbReference type="ChEBI" id="CHEBI:15361"/>
    </ligand>
</feature>
<feature type="binding site" evidence="1">
    <location>
        <position position="206"/>
    </location>
    <ligand>
        <name>pyruvate</name>
        <dbReference type="ChEBI" id="CHEBI:15361"/>
    </ligand>
</feature>
<feature type="site" description="Part of a proton relay during catalysis" evidence="1">
    <location>
        <position position="46"/>
    </location>
</feature>
<feature type="site" description="Part of a proton relay during catalysis" evidence="1">
    <location>
        <position position="109"/>
    </location>
</feature>
<gene>
    <name evidence="1" type="primary">dapA</name>
    <name type="ordered locus">all3679</name>
</gene>
<keyword id="KW-0028">Amino-acid biosynthesis</keyword>
<keyword id="KW-0963">Cytoplasm</keyword>
<keyword id="KW-0220">Diaminopimelate biosynthesis</keyword>
<keyword id="KW-0456">Lyase</keyword>
<keyword id="KW-0457">Lysine biosynthesis</keyword>
<keyword id="KW-1185">Reference proteome</keyword>
<keyword id="KW-0704">Schiff base</keyword>
<comment type="function">
    <text evidence="1">Catalyzes the condensation of (S)-aspartate-beta-semialdehyde [(S)-ASA] and pyruvate to 4-hydroxy-tetrahydrodipicolinate (HTPA).</text>
</comment>
<comment type="catalytic activity">
    <reaction evidence="1">
        <text>L-aspartate 4-semialdehyde + pyruvate = (2S,4S)-4-hydroxy-2,3,4,5-tetrahydrodipicolinate + H2O + H(+)</text>
        <dbReference type="Rhea" id="RHEA:34171"/>
        <dbReference type="ChEBI" id="CHEBI:15361"/>
        <dbReference type="ChEBI" id="CHEBI:15377"/>
        <dbReference type="ChEBI" id="CHEBI:15378"/>
        <dbReference type="ChEBI" id="CHEBI:67139"/>
        <dbReference type="ChEBI" id="CHEBI:537519"/>
        <dbReference type="EC" id="4.3.3.7"/>
    </reaction>
</comment>
<comment type="pathway">
    <text evidence="1">Amino-acid biosynthesis; L-lysine biosynthesis via DAP pathway; (S)-tetrahydrodipicolinate from L-aspartate: step 3/4.</text>
</comment>
<comment type="subunit">
    <text evidence="1">Homotetramer; dimer of dimers.</text>
</comment>
<comment type="subcellular location">
    <subcellularLocation>
        <location evidence="1">Cytoplasm</location>
    </subcellularLocation>
</comment>
<comment type="similarity">
    <text evidence="1">Belongs to the DapA family.</text>
</comment>
<comment type="caution">
    <text evidence="2">Was originally thought to be a dihydrodipicolinate synthase (DHDPS), catalyzing the condensation of (S)-aspartate-beta-semialdehyde [(S)-ASA] and pyruvate to dihydrodipicolinate (DHDP). However, it was shown in E.coli that the product of the enzymatic reaction is not dihydrodipicolinate but in fact (4S)-4-hydroxy-2,3,4,5-tetrahydro-(2S)-dipicolinic acid (HTPA), and that the consecutive dehydration reaction leading to DHDP is not spontaneous but catalyzed by DapB.</text>
</comment>
<dbReference type="EC" id="4.3.3.7" evidence="1"/>
<dbReference type="EMBL" id="BA000019">
    <property type="protein sequence ID" value="BAB75378.1"/>
    <property type="molecule type" value="Genomic_DNA"/>
</dbReference>
<dbReference type="PIR" id="AH2265">
    <property type="entry name" value="AH2265"/>
</dbReference>
<dbReference type="RefSeq" id="WP_010997823.1">
    <property type="nucleotide sequence ID" value="NZ_RSCN01000044.1"/>
</dbReference>
<dbReference type="SMR" id="Q8YQY1"/>
<dbReference type="STRING" id="103690.gene:10495721"/>
<dbReference type="KEGG" id="ana:all3679"/>
<dbReference type="eggNOG" id="COG0329">
    <property type="taxonomic scope" value="Bacteria"/>
</dbReference>
<dbReference type="OrthoDB" id="9782828at2"/>
<dbReference type="UniPathway" id="UPA00034">
    <property type="reaction ID" value="UER00017"/>
</dbReference>
<dbReference type="Proteomes" id="UP000002483">
    <property type="component" value="Chromosome"/>
</dbReference>
<dbReference type="GO" id="GO:0005829">
    <property type="term" value="C:cytosol"/>
    <property type="evidence" value="ECO:0007669"/>
    <property type="project" value="TreeGrafter"/>
</dbReference>
<dbReference type="GO" id="GO:0008840">
    <property type="term" value="F:4-hydroxy-tetrahydrodipicolinate synthase activity"/>
    <property type="evidence" value="ECO:0007669"/>
    <property type="project" value="UniProtKB-UniRule"/>
</dbReference>
<dbReference type="GO" id="GO:0019877">
    <property type="term" value="P:diaminopimelate biosynthetic process"/>
    <property type="evidence" value="ECO:0007669"/>
    <property type="project" value="UniProtKB-UniRule"/>
</dbReference>
<dbReference type="GO" id="GO:0009089">
    <property type="term" value="P:lysine biosynthetic process via diaminopimelate"/>
    <property type="evidence" value="ECO:0007669"/>
    <property type="project" value="UniProtKB-UniRule"/>
</dbReference>
<dbReference type="CDD" id="cd00950">
    <property type="entry name" value="DHDPS"/>
    <property type="match status" value="1"/>
</dbReference>
<dbReference type="Gene3D" id="3.20.20.70">
    <property type="entry name" value="Aldolase class I"/>
    <property type="match status" value="1"/>
</dbReference>
<dbReference type="HAMAP" id="MF_00418">
    <property type="entry name" value="DapA"/>
    <property type="match status" value="1"/>
</dbReference>
<dbReference type="InterPro" id="IPR013785">
    <property type="entry name" value="Aldolase_TIM"/>
</dbReference>
<dbReference type="InterPro" id="IPR005263">
    <property type="entry name" value="DapA"/>
</dbReference>
<dbReference type="InterPro" id="IPR002220">
    <property type="entry name" value="DapA-like"/>
</dbReference>
<dbReference type="InterPro" id="IPR020625">
    <property type="entry name" value="Schiff_base-form_aldolases_AS"/>
</dbReference>
<dbReference type="NCBIfam" id="TIGR00674">
    <property type="entry name" value="dapA"/>
    <property type="match status" value="1"/>
</dbReference>
<dbReference type="PANTHER" id="PTHR12128:SF66">
    <property type="entry name" value="4-HYDROXY-2-OXOGLUTARATE ALDOLASE, MITOCHONDRIAL"/>
    <property type="match status" value="1"/>
</dbReference>
<dbReference type="PANTHER" id="PTHR12128">
    <property type="entry name" value="DIHYDRODIPICOLINATE SYNTHASE"/>
    <property type="match status" value="1"/>
</dbReference>
<dbReference type="Pfam" id="PF00701">
    <property type="entry name" value="DHDPS"/>
    <property type="match status" value="1"/>
</dbReference>
<dbReference type="PIRSF" id="PIRSF001365">
    <property type="entry name" value="DHDPS"/>
    <property type="match status" value="1"/>
</dbReference>
<dbReference type="PRINTS" id="PR00146">
    <property type="entry name" value="DHPICSNTHASE"/>
</dbReference>
<dbReference type="SMART" id="SM01130">
    <property type="entry name" value="DHDPS"/>
    <property type="match status" value="1"/>
</dbReference>
<dbReference type="SUPFAM" id="SSF51569">
    <property type="entry name" value="Aldolase"/>
    <property type="match status" value="1"/>
</dbReference>
<dbReference type="PROSITE" id="PS00666">
    <property type="entry name" value="DHDPS_2"/>
    <property type="match status" value="1"/>
</dbReference>
<evidence type="ECO:0000255" key="1">
    <source>
        <dbReference type="HAMAP-Rule" id="MF_00418"/>
    </source>
</evidence>
<evidence type="ECO:0000305" key="2"/>
<name>DAPA_NOSS1</name>
<accession>Q8YQY1</accession>